<sequence>MADPWQECMDYAVTLARQAGEVVCEAIKNEMNVMLKSSPVDLVTATDQKVEKMLISSIKEKYPSHSFIGEESVAAGEKSILTDNPTWIIDPIDGTTNFVHRFPFVAVSIGFAVNKKIEFGVVYSCVEGKMYTARKGKGAFCNGQKLQVSQQEDITKSLLVTELGSSRTPETVRIVLSNMEKLFCIPVHGIRSVGTAAVNMCLVATGGADAYYEMGIHCWDVAGAGIIVTEAGGVLMDVTGGPFDLMSRRVIAANNRILAERIAKEIQVIPLQRDDED</sequence>
<organism>
    <name type="scientific">Pongo abelii</name>
    <name type="common">Sumatran orangutan</name>
    <name type="synonym">Pongo pygmaeus abelii</name>
    <dbReference type="NCBI Taxonomy" id="9601"/>
    <lineage>
        <taxon>Eukaryota</taxon>
        <taxon>Metazoa</taxon>
        <taxon>Chordata</taxon>
        <taxon>Craniata</taxon>
        <taxon>Vertebrata</taxon>
        <taxon>Euteleostomi</taxon>
        <taxon>Mammalia</taxon>
        <taxon>Eutheria</taxon>
        <taxon>Euarchontoglires</taxon>
        <taxon>Primates</taxon>
        <taxon>Haplorrhini</taxon>
        <taxon>Catarrhini</taxon>
        <taxon>Hominidae</taxon>
        <taxon>Pongo</taxon>
    </lineage>
</organism>
<accession>Q5R4X0</accession>
<accession>Q5R6Q6</accession>
<evidence type="ECO:0000250" key="1">
    <source>
        <dbReference type="UniProtKB" id="P29218"/>
    </source>
</evidence>
<evidence type="ECO:0000305" key="2"/>
<feature type="chain" id="PRO_0000142516" description="Inositol monophosphatase 1">
    <location>
        <begin position="1"/>
        <end position="277"/>
    </location>
</feature>
<feature type="binding site" evidence="1">
    <location>
        <position position="70"/>
    </location>
    <ligand>
        <name>Mg(2+)</name>
        <dbReference type="ChEBI" id="CHEBI:18420"/>
        <label>1</label>
        <note>catalytic</note>
    </ligand>
</feature>
<feature type="binding site" evidence="1">
    <location>
        <position position="70"/>
    </location>
    <ligand>
        <name>substrate</name>
    </ligand>
</feature>
<feature type="binding site" evidence="1">
    <location>
        <position position="90"/>
    </location>
    <ligand>
        <name>Mg(2+)</name>
        <dbReference type="ChEBI" id="CHEBI:18420"/>
        <label>1</label>
        <note>catalytic</note>
    </ligand>
</feature>
<feature type="binding site" evidence="1">
    <location>
        <position position="90"/>
    </location>
    <ligand>
        <name>Mg(2+)</name>
        <dbReference type="ChEBI" id="CHEBI:18420"/>
        <label>2</label>
    </ligand>
</feature>
<feature type="binding site" evidence="1">
    <location>
        <begin position="92"/>
        <end position="95"/>
    </location>
    <ligand>
        <name>substrate</name>
    </ligand>
</feature>
<feature type="binding site" evidence="1">
    <location>
        <position position="92"/>
    </location>
    <ligand>
        <name>Mg(2+)</name>
        <dbReference type="ChEBI" id="CHEBI:18420"/>
        <label>1</label>
        <note>catalytic</note>
    </ligand>
</feature>
<feature type="binding site" evidence="1">
    <location>
        <position position="93"/>
    </location>
    <ligand>
        <name>Mg(2+)</name>
        <dbReference type="ChEBI" id="CHEBI:18420"/>
        <label>2</label>
    </ligand>
</feature>
<feature type="binding site" evidence="1">
    <location>
        <begin position="194"/>
        <end position="196"/>
    </location>
    <ligand>
        <name>substrate</name>
    </ligand>
</feature>
<feature type="binding site" evidence="1">
    <location>
        <position position="213"/>
    </location>
    <ligand>
        <name>substrate</name>
    </ligand>
</feature>
<feature type="binding site" evidence="1">
    <location>
        <position position="220"/>
    </location>
    <ligand>
        <name>Mg(2+)</name>
        <dbReference type="ChEBI" id="CHEBI:18420"/>
        <label>2</label>
    </ligand>
</feature>
<feature type="binding site" evidence="1">
    <location>
        <position position="220"/>
    </location>
    <ligand>
        <name>substrate</name>
    </ligand>
</feature>
<feature type="modified residue" description="Phosphothreonine" evidence="1">
    <location>
        <position position="168"/>
    </location>
</feature>
<feature type="sequence conflict" description="In Ref. 1; CAH92554." evidence="2" ref="1">
    <original>I</original>
    <variation>V</variation>
    <location>
        <position position="109"/>
    </location>
</feature>
<dbReference type="EC" id="3.1.3.25" evidence="1"/>
<dbReference type="EC" id="3.1.3.94" evidence="1"/>
<dbReference type="EMBL" id="CR860429">
    <property type="protein sequence ID" value="CAH92554.1"/>
    <property type="molecule type" value="mRNA"/>
</dbReference>
<dbReference type="EMBL" id="CR861120">
    <property type="protein sequence ID" value="CAH93196.1"/>
    <property type="molecule type" value="mRNA"/>
</dbReference>
<dbReference type="RefSeq" id="NP_001127563.1">
    <property type="nucleotide sequence ID" value="NM_001134091.1"/>
</dbReference>
<dbReference type="RefSeq" id="XP_024106464.3">
    <property type="nucleotide sequence ID" value="XM_024250696.3"/>
</dbReference>
<dbReference type="RefSeq" id="XP_024106466.3">
    <property type="nucleotide sequence ID" value="XM_024250698.3"/>
</dbReference>
<dbReference type="SMR" id="Q5R4X0"/>
<dbReference type="FunCoup" id="Q5R4X0">
    <property type="interactions" value="1294"/>
</dbReference>
<dbReference type="STRING" id="9601.ENSPPYP00000020981"/>
<dbReference type="GeneID" id="100174641"/>
<dbReference type="KEGG" id="pon:100174641"/>
<dbReference type="CTD" id="3612"/>
<dbReference type="InParanoid" id="Q5R4X0"/>
<dbReference type="OrthoDB" id="10254945at2759"/>
<dbReference type="UniPathway" id="UPA00823">
    <property type="reaction ID" value="UER00788"/>
</dbReference>
<dbReference type="Proteomes" id="UP000001595">
    <property type="component" value="Unplaced"/>
</dbReference>
<dbReference type="GO" id="GO:0005737">
    <property type="term" value="C:cytoplasm"/>
    <property type="evidence" value="ECO:0007669"/>
    <property type="project" value="UniProtKB-SubCell"/>
</dbReference>
<dbReference type="GO" id="GO:0103026">
    <property type="term" value="F:fructose-1-phosphatase activity"/>
    <property type="evidence" value="ECO:0007669"/>
    <property type="project" value="RHEA"/>
</dbReference>
<dbReference type="GO" id="GO:0008877">
    <property type="term" value="F:glucose-1-phosphatase activity"/>
    <property type="evidence" value="ECO:0007669"/>
    <property type="project" value="RHEA"/>
</dbReference>
<dbReference type="GO" id="GO:0004346">
    <property type="term" value="F:glucose-6-phosphatase activity"/>
    <property type="evidence" value="ECO:0007669"/>
    <property type="project" value="RHEA"/>
</dbReference>
<dbReference type="GO" id="GO:0047954">
    <property type="term" value="F:glycerol-2-phosphatase activity"/>
    <property type="evidence" value="ECO:0007669"/>
    <property type="project" value="RHEA"/>
</dbReference>
<dbReference type="GO" id="GO:0008934">
    <property type="term" value="F:inositol monophosphate 1-phosphatase activity"/>
    <property type="evidence" value="ECO:0007669"/>
    <property type="project" value="InterPro"/>
</dbReference>
<dbReference type="GO" id="GO:0052832">
    <property type="term" value="F:inositol monophosphate 3-phosphatase activity"/>
    <property type="evidence" value="ECO:0007669"/>
    <property type="project" value="RHEA"/>
</dbReference>
<dbReference type="GO" id="GO:0052833">
    <property type="term" value="F:inositol monophosphate 4-phosphatase activity"/>
    <property type="evidence" value="ECO:0007669"/>
    <property type="project" value="RHEA"/>
</dbReference>
<dbReference type="GO" id="GO:0052834">
    <property type="term" value="F:inositol monophosphate phosphatase activity"/>
    <property type="evidence" value="ECO:0000250"/>
    <property type="project" value="UniProtKB"/>
</dbReference>
<dbReference type="GO" id="GO:0031403">
    <property type="term" value="F:lithium ion binding"/>
    <property type="evidence" value="ECO:0000250"/>
    <property type="project" value="UniProtKB"/>
</dbReference>
<dbReference type="GO" id="GO:0000287">
    <property type="term" value="F:magnesium ion binding"/>
    <property type="evidence" value="ECO:0000250"/>
    <property type="project" value="UniProtKB"/>
</dbReference>
<dbReference type="GO" id="GO:0030145">
    <property type="term" value="F:manganese ion binding"/>
    <property type="evidence" value="ECO:0000250"/>
    <property type="project" value="UniProtKB"/>
</dbReference>
<dbReference type="GO" id="GO:0006021">
    <property type="term" value="P:inositol biosynthetic process"/>
    <property type="evidence" value="ECO:0007669"/>
    <property type="project" value="UniProtKB-UniPathway"/>
</dbReference>
<dbReference type="GO" id="GO:0046854">
    <property type="term" value="P:phosphatidylinositol phosphate biosynthetic process"/>
    <property type="evidence" value="ECO:0007669"/>
    <property type="project" value="InterPro"/>
</dbReference>
<dbReference type="GO" id="GO:0007165">
    <property type="term" value="P:signal transduction"/>
    <property type="evidence" value="ECO:0007669"/>
    <property type="project" value="TreeGrafter"/>
</dbReference>
<dbReference type="CDD" id="cd01639">
    <property type="entry name" value="IMPase"/>
    <property type="match status" value="1"/>
</dbReference>
<dbReference type="FunFam" id="3.30.540.10:FF:000004">
    <property type="entry name" value="Inositol-1-monophosphatase"/>
    <property type="match status" value="1"/>
</dbReference>
<dbReference type="FunFam" id="3.40.190.80:FF:000002">
    <property type="entry name" value="Inositol-1-monophosphatase"/>
    <property type="match status" value="1"/>
</dbReference>
<dbReference type="Gene3D" id="3.40.190.80">
    <property type="match status" value="1"/>
</dbReference>
<dbReference type="Gene3D" id="3.30.540.10">
    <property type="entry name" value="Fructose-1,6-Bisphosphatase, subunit A, domain 1"/>
    <property type="match status" value="1"/>
</dbReference>
<dbReference type="InterPro" id="IPR033942">
    <property type="entry name" value="IMPase"/>
</dbReference>
<dbReference type="InterPro" id="IPR020583">
    <property type="entry name" value="Inositol_monoP_metal-BS"/>
</dbReference>
<dbReference type="InterPro" id="IPR020552">
    <property type="entry name" value="Inositol_monoPase_Li-sen"/>
</dbReference>
<dbReference type="InterPro" id="IPR000760">
    <property type="entry name" value="Inositol_monophosphatase-like"/>
</dbReference>
<dbReference type="InterPro" id="IPR020550">
    <property type="entry name" value="Inositol_monophosphatase_CS"/>
</dbReference>
<dbReference type="PANTHER" id="PTHR20854">
    <property type="entry name" value="INOSITOL MONOPHOSPHATASE"/>
    <property type="match status" value="1"/>
</dbReference>
<dbReference type="PANTHER" id="PTHR20854:SF26">
    <property type="entry name" value="INOSITOL MONOPHOSPHATASE 1"/>
    <property type="match status" value="1"/>
</dbReference>
<dbReference type="Pfam" id="PF00459">
    <property type="entry name" value="Inositol_P"/>
    <property type="match status" value="1"/>
</dbReference>
<dbReference type="PRINTS" id="PR00377">
    <property type="entry name" value="IMPHPHTASES"/>
</dbReference>
<dbReference type="PRINTS" id="PR00378">
    <property type="entry name" value="LIIMPHPHTASE"/>
</dbReference>
<dbReference type="SUPFAM" id="SSF56655">
    <property type="entry name" value="Carbohydrate phosphatase"/>
    <property type="match status" value="1"/>
</dbReference>
<dbReference type="PROSITE" id="PS00629">
    <property type="entry name" value="IMP_1"/>
    <property type="match status" value="1"/>
</dbReference>
<dbReference type="PROSITE" id="PS00630">
    <property type="entry name" value="IMP_2"/>
    <property type="match status" value="1"/>
</dbReference>
<gene>
    <name type="primary">IMPA1</name>
    <name type="synonym">IMPA</name>
</gene>
<proteinExistence type="evidence at transcript level"/>
<protein>
    <recommendedName>
        <fullName>Inositol monophosphatase 1</fullName>
        <shortName>IMP 1</shortName>
        <shortName>IMPase 1</shortName>
        <ecNumber evidence="1">3.1.3.25</ecNumber>
    </recommendedName>
    <alternativeName>
        <fullName evidence="1">D-galactose 1-phosphate phosphatase</fullName>
        <ecNumber evidence="1">3.1.3.94</ecNumber>
    </alternativeName>
    <alternativeName>
        <fullName>Inositol-1(or 4)-monophosphatase 1</fullName>
    </alternativeName>
    <alternativeName>
        <fullName>Lithium-sensitive myo-inositol monophosphatase A1</fullName>
    </alternativeName>
</protein>
<name>IMPA1_PONAB</name>
<keyword id="KW-0963">Cytoplasm</keyword>
<keyword id="KW-0378">Hydrolase</keyword>
<keyword id="KW-0452">Lithium</keyword>
<keyword id="KW-0460">Magnesium</keyword>
<keyword id="KW-0479">Metal-binding</keyword>
<keyword id="KW-0597">Phosphoprotein</keyword>
<keyword id="KW-1185">Reference proteome</keyword>
<comment type="function">
    <text evidence="1">Phosphatase involved in the dephosphorylation of myo-inositol monophosphate to generate myo-inositol. Is also able to dephosphorylate scyllo-inositol-phosphate, myo-inositol 1,4-diphosphate, scyllo-inositol-1,3-diphosphate and scyllo-inositol-1,4-diphosphate. Also dephosphorylates in vitro other sugar-phosphates including D-galactose-1-phosphate, glucose-1-phosphate, glucose-6-phosphate, fructose-1-phosphate, beta-glycerophosphate and 2'-AMP. Responsible for the provision of inositol required for synthesis of phosphatidylinositol and polyphosphoinositides, and involved in maintaining normal brain function. Has been implicated as the pharmacological target for lithium Li(+) action in brain.</text>
</comment>
<comment type="catalytic activity">
    <reaction evidence="1">
        <text>a myo-inositol phosphate + H2O = myo-inositol + phosphate</text>
        <dbReference type="Rhea" id="RHEA:24056"/>
        <dbReference type="ChEBI" id="CHEBI:15377"/>
        <dbReference type="ChEBI" id="CHEBI:17268"/>
        <dbReference type="ChEBI" id="CHEBI:43474"/>
        <dbReference type="ChEBI" id="CHEBI:84139"/>
        <dbReference type="EC" id="3.1.3.25"/>
    </reaction>
    <physiologicalReaction direction="left-to-right" evidence="1">
        <dbReference type="Rhea" id="RHEA:24057"/>
    </physiologicalReaction>
</comment>
<comment type="catalytic activity">
    <reaction evidence="1">
        <text>1D-myo-inositol 1-phosphate + H2O = myo-inositol + phosphate</text>
        <dbReference type="Rhea" id="RHEA:27670"/>
        <dbReference type="ChEBI" id="CHEBI:15377"/>
        <dbReference type="ChEBI" id="CHEBI:17268"/>
        <dbReference type="ChEBI" id="CHEBI:43474"/>
        <dbReference type="ChEBI" id="CHEBI:58433"/>
        <dbReference type="EC" id="3.1.3.25"/>
    </reaction>
    <physiologicalReaction direction="left-to-right" evidence="1">
        <dbReference type="Rhea" id="RHEA:27671"/>
    </physiologicalReaction>
</comment>
<comment type="catalytic activity">
    <reaction evidence="1">
        <text>1D-myo-inositol 2-phosphate + H2O = myo-inositol + phosphate</text>
        <dbReference type="Rhea" id="RHEA:44152"/>
        <dbReference type="ChEBI" id="CHEBI:15377"/>
        <dbReference type="ChEBI" id="CHEBI:17268"/>
        <dbReference type="ChEBI" id="CHEBI:43474"/>
        <dbReference type="ChEBI" id="CHEBI:84142"/>
        <dbReference type="EC" id="3.1.3.25"/>
    </reaction>
    <physiologicalReaction direction="left-to-right" evidence="1">
        <dbReference type="Rhea" id="RHEA:44153"/>
    </physiologicalReaction>
</comment>
<comment type="catalytic activity">
    <reaction evidence="1">
        <text>1D-myo-inositol 3-phosphate + H2O = myo-inositol + phosphate</text>
        <dbReference type="Rhea" id="RHEA:30739"/>
        <dbReference type="ChEBI" id="CHEBI:15377"/>
        <dbReference type="ChEBI" id="CHEBI:17268"/>
        <dbReference type="ChEBI" id="CHEBI:43474"/>
        <dbReference type="ChEBI" id="CHEBI:58401"/>
        <dbReference type="EC" id="3.1.3.25"/>
    </reaction>
    <physiologicalReaction direction="left-to-right" evidence="1">
        <dbReference type="Rhea" id="RHEA:30740"/>
    </physiologicalReaction>
</comment>
<comment type="catalytic activity">
    <reaction evidence="1">
        <text>1D-myo-inositol 4-phosphate + H2O = myo-inositol + phosphate</text>
        <dbReference type="Rhea" id="RHEA:30735"/>
        <dbReference type="ChEBI" id="CHEBI:15377"/>
        <dbReference type="ChEBI" id="CHEBI:17268"/>
        <dbReference type="ChEBI" id="CHEBI:43474"/>
        <dbReference type="ChEBI" id="CHEBI:58469"/>
        <dbReference type="EC" id="3.1.3.25"/>
    </reaction>
    <physiologicalReaction direction="left-to-right" evidence="1">
        <dbReference type="Rhea" id="RHEA:30736"/>
    </physiologicalReaction>
</comment>
<comment type="catalytic activity">
    <reaction evidence="1">
        <text>1D-myo-inositol 5-phosphate + H2O = myo-inositol + phosphate</text>
        <dbReference type="Rhea" id="RHEA:44156"/>
        <dbReference type="ChEBI" id="CHEBI:15377"/>
        <dbReference type="ChEBI" id="CHEBI:17268"/>
        <dbReference type="ChEBI" id="CHEBI:43474"/>
        <dbReference type="ChEBI" id="CHEBI:84141"/>
        <dbReference type="EC" id="3.1.3.25"/>
    </reaction>
    <physiologicalReaction direction="left-to-right" evidence="1">
        <dbReference type="Rhea" id="RHEA:44157"/>
    </physiologicalReaction>
</comment>
<comment type="catalytic activity">
    <reaction evidence="1">
        <text>1D-myo-inositol 6-phosphate + H2O = myo-inositol + phosphate</text>
        <dbReference type="Rhea" id="RHEA:44160"/>
        <dbReference type="ChEBI" id="CHEBI:15377"/>
        <dbReference type="ChEBI" id="CHEBI:17268"/>
        <dbReference type="ChEBI" id="CHEBI:43474"/>
        <dbReference type="ChEBI" id="CHEBI:64841"/>
        <dbReference type="EC" id="3.1.3.25"/>
    </reaction>
    <physiologicalReaction direction="left-to-right" evidence="1">
        <dbReference type="Rhea" id="RHEA:44161"/>
    </physiologicalReaction>
</comment>
<comment type="catalytic activity">
    <reaction evidence="1">
        <text>scyllo-inositol 1-phosphate + H2O = scyllo-inositol + phosphate</text>
        <dbReference type="Rhea" id="RHEA:82131"/>
        <dbReference type="ChEBI" id="CHEBI:10642"/>
        <dbReference type="ChEBI" id="CHEBI:15377"/>
        <dbReference type="ChEBI" id="CHEBI:43474"/>
        <dbReference type="ChEBI" id="CHEBI:232087"/>
    </reaction>
    <physiologicalReaction direction="left-to-right" evidence="1">
        <dbReference type="Rhea" id="RHEA:82132"/>
    </physiologicalReaction>
</comment>
<comment type="catalytic activity">
    <reaction evidence="1">
        <text>alpha-D-galactose 1-phosphate + H2O = D-galactose + phosphate</text>
        <dbReference type="Rhea" id="RHEA:29315"/>
        <dbReference type="ChEBI" id="CHEBI:4139"/>
        <dbReference type="ChEBI" id="CHEBI:15377"/>
        <dbReference type="ChEBI" id="CHEBI:43474"/>
        <dbReference type="ChEBI" id="CHEBI:58336"/>
        <dbReference type="EC" id="3.1.3.94"/>
    </reaction>
    <physiologicalReaction direction="left-to-right" evidence="1">
        <dbReference type="Rhea" id="RHEA:29316"/>
    </physiologicalReaction>
</comment>
<comment type="catalytic activity">
    <reaction evidence="1">
        <text>alpha-D-glucose 1-phosphate + H2O = D-glucose + phosphate</text>
        <dbReference type="Rhea" id="RHEA:19933"/>
        <dbReference type="ChEBI" id="CHEBI:4167"/>
        <dbReference type="ChEBI" id="CHEBI:15377"/>
        <dbReference type="ChEBI" id="CHEBI:43474"/>
        <dbReference type="ChEBI" id="CHEBI:58601"/>
    </reaction>
    <physiologicalReaction direction="left-to-right" evidence="1">
        <dbReference type="Rhea" id="RHEA:19934"/>
    </physiologicalReaction>
</comment>
<comment type="catalytic activity">
    <reaction evidence="1">
        <text>D-glucose 6-phosphate + H2O = D-glucose + phosphate</text>
        <dbReference type="Rhea" id="RHEA:16689"/>
        <dbReference type="ChEBI" id="CHEBI:4167"/>
        <dbReference type="ChEBI" id="CHEBI:15377"/>
        <dbReference type="ChEBI" id="CHEBI:43474"/>
        <dbReference type="ChEBI" id="CHEBI:61548"/>
    </reaction>
    <physiologicalReaction direction="left-to-right" evidence="1">
        <dbReference type="Rhea" id="RHEA:16690"/>
    </physiologicalReaction>
</comment>
<comment type="catalytic activity">
    <reaction evidence="1">
        <text>beta-D-fructose 1-phosphate + H2O = D-fructose + phosphate</text>
        <dbReference type="Rhea" id="RHEA:35603"/>
        <dbReference type="ChEBI" id="CHEBI:15377"/>
        <dbReference type="ChEBI" id="CHEBI:37721"/>
        <dbReference type="ChEBI" id="CHEBI:43474"/>
        <dbReference type="ChEBI" id="CHEBI:138881"/>
    </reaction>
    <physiologicalReaction direction="left-to-right" evidence="1">
        <dbReference type="Rhea" id="RHEA:35604"/>
    </physiologicalReaction>
</comment>
<comment type="catalytic activity">
    <reaction evidence="1">
        <text>glycerol 2-phosphate + H2O = glycerol + phosphate</text>
        <dbReference type="Rhea" id="RHEA:13105"/>
        <dbReference type="ChEBI" id="CHEBI:15377"/>
        <dbReference type="ChEBI" id="CHEBI:17754"/>
        <dbReference type="ChEBI" id="CHEBI:43474"/>
        <dbReference type="ChEBI" id="CHEBI:58083"/>
    </reaction>
    <physiologicalReaction direction="left-to-right" evidence="1">
        <dbReference type="Rhea" id="RHEA:13106"/>
    </physiologicalReaction>
</comment>
<comment type="catalytic activity">
    <reaction evidence="1">
        <text>adenosine 2'-phosphate + H2O = adenosine + phosphate</text>
        <dbReference type="Rhea" id="RHEA:37343"/>
        <dbReference type="ChEBI" id="CHEBI:15377"/>
        <dbReference type="ChEBI" id="CHEBI:16335"/>
        <dbReference type="ChEBI" id="CHEBI:43474"/>
        <dbReference type="ChEBI" id="CHEBI:77740"/>
    </reaction>
    <physiologicalReaction direction="left-to-right" evidence="1">
        <dbReference type="Rhea" id="RHEA:37344"/>
    </physiologicalReaction>
</comment>
<comment type="cofactor">
    <cofactor evidence="1">
        <name>Mg(2+)</name>
        <dbReference type="ChEBI" id="CHEBI:18420"/>
    </cofactor>
</comment>
<comment type="activity regulation">
    <text evidence="1">Inhibited by Li(+), Ca(2+) and Mn(2+), but also by Mg(2+) at concentrations above 3 mM.</text>
</comment>
<comment type="pathway">
    <text>Polyol metabolism; myo-inositol biosynthesis; myo-inositol from D-glucose 6-phosphate: step 2/2.</text>
</comment>
<comment type="subunit">
    <text evidence="1">Homodimer.</text>
</comment>
<comment type="subcellular location">
    <subcellularLocation>
        <location evidence="1">Cytoplasm</location>
    </subcellularLocation>
</comment>
<comment type="similarity">
    <text evidence="2">Belongs to the inositol monophosphatase superfamily.</text>
</comment>
<reference key="1">
    <citation type="submission" date="2004-11" db="EMBL/GenBank/DDBJ databases">
        <authorList>
            <consortium name="The German cDNA consortium"/>
        </authorList>
    </citation>
    <scope>NUCLEOTIDE SEQUENCE [LARGE SCALE MRNA]</scope>
    <source>
        <tissue>Brain cortex</tissue>
    </source>
</reference>